<evidence type="ECO:0000250" key="1"/>
<evidence type="ECO:0000250" key="2">
    <source>
        <dbReference type="UniProtKB" id="A6QG31"/>
    </source>
</evidence>
<evidence type="ECO:0000250" key="3">
    <source>
        <dbReference type="UniProtKB" id="Q7A152"/>
    </source>
</evidence>
<evidence type="ECO:0000250" key="4">
    <source>
        <dbReference type="UniProtKB" id="Q7A655"/>
    </source>
</evidence>
<evidence type="ECO:0000255" key="5">
    <source>
        <dbReference type="PROSITE-ProRule" id="PRU00337"/>
    </source>
</evidence>
<evidence type="ECO:0000255" key="6">
    <source>
        <dbReference type="PROSITE-ProRule" id="PRU00477"/>
    </source>
</evidence>
<evidence type="ECO:0000256" key="7">
    <source>
        <dbReference type="SAM" id="MobiDB-lite"/>
    </source>
</evidence>
<evidence type="ECO:0000305" key="8"/>
<keyword id="KW-0134">Cell wall</keyword>
<keyword id="KW-0349">Heme</keyword>
<keyword id="KW-0408">Iron</keyword>
<keyword id="KW-0479">Metal-binding</keyword>
<keyword id="KW-0572">Peptidoglycan-anchor</keyword>
<keyword id="KW-0964">Secreted</keyword>
<keyword id="KW-0732">Signal</keyword>
<protein>
    <recommendedName>
        <fullName>Iron-regulated surface determinant protein A</fullName>
    </recommendedName>
    <alternativeName>
        <fullName>Fur-regulated protein A</fullName>
    </alternativeName>
    <alternativeName>
        <fullName>Staphylococcal transferrin-binding protein A</fullName>
    </alternativeName>
</protein>
<sequence length="350" mass="38746">MTKHYLNSKYQSEQRSSAMKKITMGTASIILGSLVYIGADSQQVNAATEATNATNNQSTQVSQATSQPINFQVQKDGSSEKSHMDDYMQHPGKVIKQNNKYYFQTVLNNASFWKEYKFYNANNQELATTVVNDNKKADTRTINVAVEPGYKSLTTKVHIVVPQINYNHRYTTHLEFEKAIPTLADAAKPNNVKPVQPKPAQPKTPTEQTKPVQPKVEKVKPTVTTTSKVEDNHSTKVVSTDTTKDQTKTQTAHTVKTAQTAQEQNKVQTPVKDVATAKSESNNQAVSDNKSQQTNKVTKHNETPKQASKAKELPKTGLTSVDNFISTVAFATLALLGSLSLLLFKRKESK</sequence>
<reference key="1">
    <citation type="submission" date="2007-06" db="EMBL/GenBank/DDBJ databases">
        <title>Complete sequence of chromosome of Staphylococcus aureus subsp. aureus JH1.</title>
        <authorList>
            <consortium name="US DOE Joint Genome Institute"/>
            <person name="Copeland A."/>
            <person name="Lucas S."/>
            <person name="Lapidus A."/>
            <person name="Barry K."/>
            <person name="Detter J.C."/>
            <person name="Glavina del Rio T."/>
            <person name="Hammon N."/>
            <person name="Israni S."/>
            <person name="Dalin E."/>
            <person name="Tice H."/>
            <person name="Pitluck S."/>
            <person name="Chain P."/>
            <person name="Malfatti S."/>
            <person name="Shin M."/>
            <person name="Vergez L."/>
            <person name="Schmutz J."/>
            <person name="Larimer F."/>
            <person name="Land M."/>
            <person name="Hauser L."/>
            <person name="Kyrpides N."/>
            <person name="Ivanova N."/>
            <person name="Tomasz A."/>
            <person name="Richardson P."/>
        </authorList>
    </citation>
    <scope>NUCLEOTIDE SEQUENCE [LARGE SCALE GENOMIC DNA]</scope>
    <source>
        <strain>JH1</strain>
    </source>
</reference>
<name>ISDA_STAA2</name>
<gene>
    <name type="primary">isdA</name>
    <name type="synonym">frpA</name>
    <name type="synonym">stbA</name>
    <name type="ordered locus">SaurJH1_1211</name>
</gene>
<comment type="function">
    <text evidence="2 3">Cell wall-anchored surface receptor that participates in the extraction of heme from oxidized methemoglobin/metHb to enable growth on hemoglobin as a sole iron source (By similarity). Receives heme from IsdB and transfers it to IsdC (By similarity). Also plays a role in the inhibition of host immune response. Protects S.aureus against the bactericidal protease activity of apolactoferrin. Decreases bacterial cellular hydrophobicity, which renders S.aureus resistant to bactericidal human skin fatty acids as well as to beta-defensins and cathelicidin. Also binds fibronectin and chains B-beta and gamma of fibrinogen, promoting clumping of S.aureus with fibrinogen. Involved in adherence of S.aureus to human desquamated nasal epithelial cells and is required for nasal colonization (By similarity).</text>
</comment>
<comment type="subunit">
    <text evidence="2 3">Monomer. Interacts with IsdC (By similarity). Interacts with IsdB (By similarity).</text>
</comment>
<comment type="subcellular location">
    <subcellularLocation>
        <location evidence="2">Secreted</location>
        <location evidence="2">Cell wall</location>
        <topology evidence="2">Peptidoglycan-anchor</topology>
    </subcellularLocation>
    <text evidence="2">Encodes an LPXTG motif-containing sorting signal that targets to the cell wall, which is catalyzed by sortase A.</text>
</comment>
<comment type="induction">
    <text evidence="1">Repressed by fur in the presence of iron.</text>
</comment>
<comment type="domain">
    <text evidence="1">The NEAT domain is responsible for binding Fe(3+) and Fe(2+) heme and fibrinogen. The NEAT domain is an inhibitor of apolactoferrin activity, while the C-domain confers resistance to bovine lactoferricin (By similarity).</text>
</comment>
<comment type="similarity">
    <text evidence="8">Belongs to the IsdA family.</text>
</comment>
<dbReference type="EMBL" id="CP000736">
    <property type="protein sequence ID" value="ABR52065.1"/>
    <property type="molecule type" value="Genomic_DNA"/>
</dbReference>
<dbReference type="SMR" id="A6U0U7"/>
<dbReference type="KEGG" id="sah:SaurJH1_1211"/>
<dbReference type="HOGENOM" id="CLU_068057_0_0_9"/>
<dbReference type="PRO" id="PR:A6U0U7"/>
<dbReference type="GO" id="GO:0005576">
    <property type="term" value="C:extracellular region"/>
    <property type="evidence" value="ECO:0007669"/>
    <property type="project" value="UniProtKB-KW"/>
</dbReference>
<dbReference type="GO" id="GO:0046872">
    <property type="term" value="F:metal ion binding"/>
    <property type="evidence" value="ECO:0007669"/>
    <property type="project" value="UniProtKB-KW"/>
</dbReference>
<dbReference type="CDD" id="cd06920">
    <property type="entry name" value="NEAT"/>
    <property type="match status" value="1"/>
</dbReference>
<dbReference type="Gene3D" id="2.60.40.1850">
    <property type="match status" value="1"/>
</dbReference>
<dbReference type="InterPro" id="IPR050436">
    <property type="entry name" value="IsdA"/>
</dbReference>
<dbReference type="InterPro" id="IPR019931">
    <property type="entry name" value="LPXTG_anchor"/>
</dbReference>
<dbReference type="InterPro" id="IPR006635">
    <property type="entry name" value="NEAT_dom"/>
</dbReference>
<dbReference type="InterPro" id="IPR037250">
    <property type="entry name" value="NEAT_dom_sf"/>
</dbReference>
<dbReference type="NCBIfam" id="TIGR01167">
    <property type="entry name" value="LPXTG_anchor"/>
    <property type="match status" value="1"/>
</dbReference>
<dbReference type="PANTHER" id="PTHR37824">
    <property type="entry name" value="IRON-REGULATED SURFACE DETERMINANT PROTEIN C"/>
    <property type="match status" value="1"/>
</dbReference>
<dbReference type="PANTHER" id="PTHR37824:SF1">
    <property type="entry name" value="IRON-REGULATED SURFACE DETERMINANT PROTEIN C"/>
    <property type="match status" value="1"/>
</dbReference>
<dbReference type="Pfam" id="PF00746">
    <property type="entry name" value="Gram_pos_anchor"/>
    <property type="match status" value="1"/>
</dbReference>
<dbReference type="Pfam" id="PF05031">
    <property type="entry name" value="NEAT"/>
    <property type="match status" value="1"/>
</dbReference>
<dbReference type="SMART" id="SM00725">
    <property type="entry name" value="NEAT"/>
    <property type="match status" value="1"/>
</dbReference>
<dbReference type="SUPFAM" id="SSF158911">
    <property type="entry name" value="NEAT domain-like"/>
    <property type="match status" value="1"/>
</dbReference>
<dbReference type="PROSITE" id="PS50847">
    <property type="entry name" value="GRAM_POS_ANCHORING"/>
    <property type="match status" value="1"/>
</dbReference>
<dbReference type="PROSITE" id="PS50978">
    <property type="entry name" value="NEAT"/>
    <property type="match status" value="1"/>
</dbReference>
<feature type="signal peptide" evidence="1">
    <location>
        <begin position="1"/>
        <end position="46"/>
    </location>
</feature>
<feature type="chain" id="PRO_5000256992" description="Iron-regulated surface determinant protein A">
    <location>
        <begin position="47"/>
        <end position="316"/>
    </location>
</feature>
<feature type="propeptide" id="PRO_0000333238" description="Removed by sortase A" evidence="6">
    <location>
        <begin position="317"/>
        <end position="350"/>
    </location>
</feature>
<feature type="domain" description="NEAT" evidence="5">
    <location>
        <begin position="62"/>
        <end position="184"/>
    </location>
</feature>
<feature type="region of interest" description="Disordered" evidence="7">
    <location>
        <begin position="188"/>
        <end position="314"/>
    </location>
</feature>
<feature type="short sequence motif" description="LPXTG sorting signal" evidence="6">
    <location>
        <begin position="313"/>
        <end position="317"/>
    </location>
</feature>
<feature type="compositionally biased region" description="Low complexity" evidence="7">
    <location>
        <begin position="203"/>
        <end position="214"/>
    </location>
</feature>
<feature type="compositionally biased region" description="Polar residues" evidence="7">
    <location>
        <begin position="252"/>
        <end position="268"/>
    </location>
</feature>
<feature type="compositionally biased region" description="Polar residues" evidence="7">
    <location>
        <begin position="278"/>
        <end position="296"/>
    </location>
</feature>
<feature type="compositionally biased region" description="Basic and acidic residues" evidence="7">
    <location>
        <begin position="299"/>
        <end position="314"/>
    </location>
</feature>
<feature type="binding site" evidence="1">
    <location>
        <position position="75"/>
    </location>
    <ligand>
        <name>heme</name>
        <dbReference type="ChEBI" id="CHEBI:30413"/>
    </ligand>
</feature>
<feature type="binding site" evidence="1">
    <location>
        <position position="82"/>
    </location>
    <ligand>
        <name>heme</name>
        <dbReference type="ChEBI" id="CHEBI:30413"/>
    </ligand>
</feature>
<feature type="binding site" description="axial binding residue" evidence="4">
    <location>
        <position position="166"/>
    </location>
    <ligand>
        <name>heme</name>
        <dbReference type="ChEBI" id="CHEBI:30413"/>
    </ligand>
    <ligandPart>
        <name>Fe</name>
        <dbReference type="ChEBI" id="CHEBI:18248"/>
    </ligandPart>
</feature>
<feature type="modified residue" description="Pentaglycyl murein peptidoglycan amidated threonine" evidence="6">
    <location>
        <position position="316"/>
    </location>
</feature>
<accession>A6U0U7</accession>
<organism>
    <name type="scientific">Staphylococcus aureus (strain JH1)</name>
    <dbReference type="NCBI Taxonomy" id="359787"/>
    <lineage>
        <taxon>Bacteria</taxon>
        <taxon>Bacillati</taxon>
        <taxon>Bacillota</taxon>
        <taxon>Bacilli</taxon>
        <taxon>Bacillales</taxon>
        <taxon>Staphylococcaceae</taxon>
        <taxon>Staphylococcus</taxon>
    </lineage>
</organism>
<proteinExistence type="inferred from homology"/>